<accession>Q7ZXF1</accession>
<evidence type="ECO:0000250" key="1">
    <source>
        <dbReference type="UniProtKB" id="Q13614"/>
    </source>
</evidence>
<evidence type="ECO:0000250" key="2">
    <source>
        <dbReference type="UniProtKB" id="Q9NYA4"/>
    </source>
</evidence>
<evidence type="ECO:0000255" key="3"/>
<evidence type="ECO:0000255" key="4">
    <source>
        <dbReference type="PROSITE-ProRule" id="PRU00091"/>
    </source>
</evidence>
<evidence type="ECO:0000255" key="5">
    <source>
        <dbReference type="PROSITE-ProRule" id="PRU00669"/>
    </source>
</evidence>
<evidence type="ECO:0000256" key="6">
    <source>
        <dbReference type="SAM" id="MobiDB-lite"/>
    </source>
</evidence>
<evidence type="ECO:0000305" key="7"/>
<gene>
    <name type="primary">mtmr4</name>
</gene>
<dbReference type="EC" id="3.1.3.95" evidence="2"/>
<dbReference type="EMBL" id="BC045024">
    <property type="protein sequence ID" value="AAH45024.1"/>
    <property type="molecule type" value="mRNA"/>
</dbReference>
<dbReference type="RefSeq" id="NP_001080273.1">
    <property type="nucleotide sequence ID" value="NM_001086804.1"/>
</dbReference>
<dbReference type="SMR" id="Q7ZXF1"/>
<dbReference type="GeneID" id="379965"/>
<dbReference type="KEGG" id="xla:379965"/>
<dbReference type="AGR" id="Xenbase:XB-GENE-986319"/>
<dbReference type="CTD" id="379965"/>
<dbReference type="Xenbase" id="XB-GENE-986319">
    <property type="gene designation" value="mtmr4.L"/>
</dbReference>
<dbReference type="OrthoDB" id="271628at2759"/>
<dbReference type="Proteomes" id="UP000186698">
    <property type="component" value="Chromosome 2L"/>
</dbReference>
<dbReference type="Bgee" id="379965">
    <property type="expression patterns" value="Expressed in spleen and 19 other cell types or tissues"/>
</dbReference>
<dbReference type="GO" id="GO:0005737">
    <property type="term" value="C:cytoplasm"/>
    <property type="evidence" value="ECO:0000318"/>
    <property type="project" value="GO_Central"/>
</dbReference>
<dbReference type="GO" id="GO:0031901">
    <property type="term" value="C:early endosome membrane"/>
    <property type="evidence" value="ECO:0007669"/>
    <property type="project" value="UniProtKB-SubCell"/>
</dbReference>
<dbReference type="GO" id="GO:0036186">
    <property type="term" value="C:early phagosome membrane"/>
    <property type="evidence" value="ECO:0000250"/>
    <property type="project" value="UniProtKB"/>
</dbReference>
<dbReference type="GO" id="GO:0010008">
    <property type="term" value="C:endosome membrane"/>
    <property type="evidence" value="ECO:0000250"/>
    <property type="project" value="UniProtKB"/>
</dbReference>
<dbReference type="GO" id="GO:0031902">
    <property type="term" value="C:late endosome membrane"/>
    <property type="evidence" value="ECO:0007669"/>
    <property type="project" value="UniProtKB-SubCell"/>
</dbReference>
<dbReference type="GO" id="GO:0016020">
    <property type="term" value="C:membrane"/>
    <property type="evidence" value="ECO:0000318"/>
    <property type="project" value="GO_Central"/>
</dbReference>
<dbReference type="GO" id="GO:0055038">
    <property type="term" value="C:recycling endosome membrane"/>
    <property type="evidence" value="ECO:0007669"/>
    <property type="project" value="UniProtKB-SubCell"/>
</dbReference>
<dbReference type="GO" id="GO:0060090">
    <property type="term" value="F:molecular adaptor activity"/>
    <property type="evidence" value="ECO:0000250"/>
    <property type="project" value="UniProtKB"/>
</dbReference>
<dbReference type="GO" id="GO:0052629">
    <property type="term" value="F:phosphatidylinositol-3,5-bisphosphate 3-phosphatase activity"/>
    <property type="evidence" value="ECO:0000250"/>
    <property type="project" value="UniProtKB"/>
</dbReference>
<dbReference type="GO" id="GO:0004438">
    <property type="term" value="F:phosphatidylinositol-3-phosphate phosphatase activity"/>
    <property type="evidence" value="ECO:0000250"/>
    <property type="project" value="UniProtKB"/>
</dbReference>
<dbReference type="GO" id="GO:0019903">
    <property type="term" value="F:protein phosphatase binding"/>
    <property type="evidence" value="ECO:0000318"/>
    <property type="project" value="GO_Central"/>
</dbReference>
<dbReference type="GO" id="GO:0004725">
    <property type="term" value="F:protein tyrosine phosphatase activity"/>
    <property type="evidence" value="ECO:0007669"/>
    <property type="project" value="UniProtKB-EC"/>
</dbReference>
<dbReference type="GO" id="GO:0008270">
    <property type="term" value="F:zinc ion binding"/>
    <property type="evidence" value="ECO:0007669"/>
    <property type="project" value="UniProtKB-KW"/>
</dbReference>
<dbReference type="GO" id="GO:0061952">
    <property type="term" value="P:midbody abscission"/>
    <property type="evidence" value="ECO:0000250"/>
    <property type="project" value="UniProtKB"/>
</dbReference>
<dbReference type="GO" id="GO:2001136">
    <property type="term" value="P:negative regulation of endocytic recycling"/>
    <property type="evidence" value="ECO:0000250"/>
    <property type="project" value="UniProtKB"/>
</dbReference>
<dbReference type="GO" id="GO:0090382">
    <property type="term" value="P:phagosome maturation"/>
    <property type="evidence" value="ECO:0000250"/>
    <property type="project" value="UniProtKB"/>
</dbReference>
<dbReference type="GO" id="GO:0046856">
    <property type="term" value="P:phosphatidylinositol dephosphorylation"/>
    <property type="evidence" value="ECO:0000250"/>
    <property type="project" value="UniProtKB"/>
</dbReference>
<dbReference type="GO" id="GO:0010506">
    <property type="term" value="P:regulation of autophagy"/>
    <property type="evidence" value="ECO:0007669"/>
    <property type="project" value="TreeGrafter"/>
</dbReference>
<dbReference type="CDD" id="cd15733">
    <property type="entry name" value="FYVE_MTMR4"/>
    <property type="match status" value="1"/>
</dbReference>
<dbReference type="CDD" id="cd13342">
    <property type="entry name" value="PH-GRAM_MTMR4"/>
    <property type="match status" value="1"/>
</dbReference>
<dbReference type="CDD" id="cd14587">
    <property type="entry name" value="PTP-MTMR4"/>
    <property type="match status" value="1"/>
</dbReference>
<dbReference type="FunFam" id="3.30.40.10:FF:000073">
    <property type="entry name" value="myotubularin-related protein 4 isoform X2"/>
    <property type="match status" value="1"/>
</dbReference>
<dbReference type="Gene3D" id="3.30.40.10">
    <property type="entry name" value="Zinc/RING finger domain, C3HC4 (zinc finger)"/>
    <property type="match status" value="1"/>
</dbReference>
<dbReference type="InterPro" id="IPR046978">
    <property type="entry name" value="MTMR4_FYVE"/>
</dbReference>
<dbReference type="InterPro" id="IPR035997">
    <property type="entry name" value="MTMR4_PH-GRAM"/>
</dbReference>
<dbReference type="InterPro" id="IPR030590">
    <property type="entry name" value="MTMR4_PTP"/>
</dbReference>
<dbReference type="InterPro" id="IPR030564">
    <property type="entry name" value="Myotubularin"/>
</dbReference>
<dbReference type="InterPro" id="IPR010569">
    <property type="entry name" value="Myotubularin-like_Pase_dom"/>
</dbReference>
<dbReference type="InterPro" id="IPR029021">
    <property type="entry name" value="Prot-tyrosine_phosphatase-like"/>
</dbReference>
<dbReference type="InterPro" id="IPR016130">
    <property type="entry name" value="Tyr_Pase_AS"/>
</dbReference>
<dbReference type="InterPro" id="IPR000306">
    <property type="entry name" value="Znf_FYVE"/>
</dbReference>
<dbReference type="InterPro" id="IPR017455">
    <property type="entry name" value="Znf_FYVE-rel"/>
</dbReference>
<dbReference type="InterPro" id="IPR011011">
    <property type="entry name" value="Znf_FYVE_PHD"/>
</dbReference>
<dbReference type="InterPro" id="IPR013083">
    <property type="entry name" value="Znf_RING/FYVE/PHD"/>
</dbReference>
<dbReference type="PANTHER" id="PTHR10807">
    <property type="entry name" value="MYOTUBULARIN-RELATED"/>
    <property type="match status" value="1"/>
</dbReference>
<dbReference type="PANTHER" id="PTHR10807:SF64">
    <property type="entry name" value="MYOTUBULARIN-RELATED PROTEIN 4"/>
    <property type="match status" value="1"/>
</dbReference>
<dbReference type="Pfam" id="PF01363">
    <property type="entry name" value="FYVE"/>
    <property type="match status" value="1"/>
</dbReference>
<dbReference type="Pfam" id="PF06602">
    <property type="entry name" value="Myotub-related"/>
    <property type="match status" value="1"/>
</dbReference>
<dbReference type="SMART" id="SM00064">
    <property type="entry name" value="FYVE"/>
    <property type="match status" value="1"/>
</dbReference>
<dbReference type="SUPFAM" id="SSF52799">
    <property type="entry name" value="(Phosphotyrosine protein) phosphatases II"/>
    <property type="match status" value="1"/>
</dbReference>
<dbReference type="SUPFAM" id="SSF57903">
    <property type="entry name" value="FYVE/PHD zinc finger"/>
    <property type="match status" value="1"/>
</dbReference>
<dbReference type="SUPFAM" id="SSF50729">
    <property type="entry name" value="PH domain-like"/>
    <property type="match status" value="1"/>
</dbReference>
<dbReference type="PROSITE" id="PS51339">
    <property type="entry name" value="PPASE_MYOTUBULARIN"/>
    <property type="match status" value="1"/>
</dbReference>
<dbReference type="PROSITE" id="PS00383">
    <property type="entry name" value="TYR_PHOSPHATASE_1"/>
    <property type="match status" value="1"/>
</dbReference>
<dbReference type="PROSITE" id="PS50178">
    <property type="entry name" value="ZF_FYVE"/>
    <property type="match status" value="1"/>
</dbReference>
<organism>
    <name type="scientific">Xenopus laevis</name>
    <name type="common">African clawed frog</name>
    <dbReference type="NCBI Taxonomy" id="8355"/>
    <lineage>
        <taxon>Eukaryota</taxon>
        <taxon>Metazoa</taxon>
        <taxon>Chordata</taxon>
        <taxon>Craniata</taxon>
        <taxon>Vertebrata</taxon>
        <taxon>Euteleostomi</taxon>
        <taxon>Amphibia</taxon>
        <taxon>Batrachia</taxon>
        <taxon>Anura</taxon>
        <taxon>Pipoidea</taxon>
        <taxon>Pipidae</taxon>
        <taxon>Xenopodinae</taxon>
        <taxon>Xenopus</taxon>
        <taxon>Xenopus</taxon>
    </lineage>
</organism>
<feature type="chain" id="PRO_0000304811" description="Phosphatidylinositol-3,5-bisphosphate 3-phosphatase MTMR4">
    <location>
        <begin position="1"/>
        <end position="1078"/>
    </location>
</feature>
<feature type="domain" description="Myotubularin phosphatase" evidence="5">
    <location>
        <begin position="154"/>
        <end position="571"/>
    </location>
</feature>
<feature type="zinc finger region" description="FYVE-type" evidence="4">
    <location>
        <begin position="997"/>
        <end position="1057"/>
    </location>
</feature>
<feature type="region of interest" description="Disordered" evidence="6">
    <location>
        <begin position="267"/>
        <end position="290"/>
    </location>
</feature>
<feature type="region of interest" description="Disordered" evidence="6">
    <location>
        <begin position="629"/>
        <end position="694"/>
    </location>
</feature>
<feature type="region of interest" description="Disordered" evidence="6">
    <location>
        <begin position="960"/>
        <end position="982"/>
    </location>
</feature>
<feature type="coiled-coil region" evidence="3">
    <location>
        <begin position="904"/>
        <end position="935"/>
    </location>
</feature>
<feature type="compositionally biased region" description="Low complexity" evidence="6">
    <location>
        <begin position="270"/>
        <end position="282"/>
    </location>
</feature>
<feature type="compositionally biased region" description="Polar residues" evidence="6">
    <location>
        <begin position="629"/>
        <end position="648"/>
    </location>
</feature>
<feature type="compositionally biased region" description="Basic and acidic residues" evidence="6">
    <location>
        <begin position="968"/>
        <end position="982"/>
    </location>
</feature>
<feature type="active site" description="Phosphocysteine intermediate" evidence="1">
    <location>
        <position position="408"/>
    </location>
</feature>
<feature type="binding site" evidence="1">
    <location>
        <position position="321"/>
    </location>
    <ligand>
        <name>a 1,2-diacyl-sn-glycero-3-phospho-(1D-myo-inositol-3,5-bisphosphate)</name>
        <dbReference type="ChEBI" id="CHEBI:57923"/>
    </ligand>
</feature>
<feature type="binding site" evidence="1">
    <location>
        <position position="321"/>
    </location>
    <ligand>
        <name>a 1,2-diacyl-sn-glycero-3-phospho-(1D-myo-inositol-3-phosphate)</name>
        <dbReference type="ChEBI" id="CHEBI:58088"/>
    </ligand>
</feature>
<feature type="binding site" evidence="1">
    <location>
        <position position="346"/>
    </location>
    <ligand>
        <name>a 1,2-diacyl-sn-glycero-3-phospho-(1D-myo-inositol-3,5-bisphosphate)</name>
        <dbReference type="ChEBI" id="CHEBI:57923"/>
    </ligand>
</feature>
<feature type="binding site" evidence="1">
    <location>
        <position position="346"/>
    </location>
    <ligand>
        <name>a 1,2-diacyl-sn-glycero-3-phospho-(1D-myo-inositol-3-phosphate)</name>
        <dbReference type="ChEBI" id="CHEBI:58088"/>
    </ligand>
</feature>
<feature type="binding site" evidence="1">
    <location>
        <position position="347"/>
    </location>
    <ligand>
        <name>a 1,2-diacyl-sn-glycero-3-phospho-(1D-myo-inositol-3,5-bisphosphate)</name>
        <dbReference type="ChEBI" id="CHEBI:57923"/>
    </ligand>
</feature>
<feature type="binding site" evidence="1">
    <location>
        <position position="347"/>
    </location>
    <ligand>
        <name>a 1,2-diacyl-sn-glycero-3-phospho-(1D-myo-inositol-3-phosphate)</name>
        <dbReference type="ChEBI" id="CHEBI:58088"/>
    </ligand>
</feature>
<feature type="binding site" evidence="1">
    <location>
        <position position="409"/>
    </location>
    <ligand>
        <name>a 1,2-diacyl-sn-glycero-3-phospho-(1D-myo-inositol-3,5-bisphosphate)</name>
        <dbReference type="ChEBI" id="CHEBI:57923"/>
    </ligand>
</feature>
<feature type="binding site" evidence="1">
    <location>
        <position position="409"/>
    </location>
    <ligand>
        <name>a 1,2-diacyl-sn-glycero-3-phospho-(1D-myo-inositol-3-phosphate)</name>
        <dbReference type="ChEBI" id="CHEBI:58088"/>
    </ligand>
</feature>
<feature type="binding site" evidence="1">
    <location>
        <position position="410"/>
    </location>
    <ligand>
        <name>a 1,2-diacyl-sn-glycero-3-phospho-(1D-myo-inositol-3,5-bisphosphate)</name>
        <dbReference type="ChEBI" id="CHEBI:57923"/>
    </ligand>
</feature>
<feature type="binding site" evidence="1">
    <location>
        <position position="410"/>
    </location>
    <ligand>
        <name>a 1,2-diacyl-sn-glycero-3-phospho-(1D-myo-inositol-3-phosphate)</name>
        <dbReference type="ChEBI" id="CHEBI:58088"/>
    </ligand>
</feature>
<feature type="binding site" evidence="1">
    <location>
        <position position="411"/>
    </location>
    <ligand>
        <name>a 1,2-diacyl-sn-glycero-3-phospho-(1D-myo-inositol-3,5-bisphosphate)</name>
        <dbReference type="ChEBI" id="CHEBI:57923"/>
    </ligand>
</feature>
<feature type="binding site" evidence="1">
    <location>
        <position position="411"/>
    </location>
    <ligand>
        <name>a 1,2-diacyl-sn-glycero-3-phospho-(1D-myo-inositol-3-phosphate)</name>
        <dbReference type="ChEBI" id="CHEBI:58088"/>
    </ligand>
</feature>
<feature type="binding site" evidence="1">
    <location>
        <position position="412"/>
    </location>
    <ligand>
        <name>a 1,2-diacyl-sn-glycero-3-phospho-(1D-myo-inositol-3,5-bisphosphate)</name>
        <dbReference type="ChEBI" id="CHEBI:57923"/>
    </ligand>
</feature>
<feature type="binding site" evidence="1">
    <location>
        <position position="412"/>
    </location>
    <ligand>
        <name>a 1,2-diacyl-sn-glycero-3-phospho-(1D-myo-inositol-3-phosphate)</name>
        <dbReference type="ChEBI" id="CHEBI:58088"/>
    </ligand>
</feature>
<feature type="binding site" evidence="1">
    <location>
        <position position="413"/>
    </location>
    <ligand>
        <name>a 1,2-diacyl-sn-glycero-3-phospho-(1D-myo-inositol-3,5-bisphosphate)</name>
        <dbReference type="ChEBI" id="CHEBI:57923"/>
    </ligand>
</feature>
<feature type="binding site" evidence="1">
    <location>
        <position position="413"/>
    </location>
    <ligand>
        <name>a 1,2-diacyl-sn-glycero-3-phospho-(1D-myo-inositol-3-phosphate)</name>
        <dbReference type="ChEBI" id="CHEBI:58088"/>
    </ligand>
</feature>
<feature type="binding site" evidence="1">
    <location>
        <position position="414"/>
    </location>
    <ligand>
        <name>a 1,2-diacyl-sn-glycero-3-phospho-(1D-myo-inositol-3,5-bisphosphate)</name>
        <dbReference type="ChEBI" id="CHEBI:57923"/>
    </ligand>
</feature>
<feature type="binding site" evidence="1">
    <location>
        <position position="414"/>
    </location>
    <ligand>
        <name>a 1,2-diacyl-sn-glycero-3-phospho-(1D-myo-inositol-3-phosphate)</name>
        <dbReference type="ChEBI" id="CHEBI:58088"/>
    </ligand>
</feature>
<feature type="binding site" evidence="1">
    <location>
        <position position="450"/>
    </location>
    <ligand>
        <name>a 1,2-diacyl-sn-glycero-3-phospho-(1D-myo-inositol-3,5-bisphosphate)</name>
        <dbReference type="ChEBI" id="CHEBI:57923"/>
    </ligand>
</feature>
<feature type="binding site" evidence="1">
    <location>
        <position position="454"/>
    </location>
    <ligand>
        <name>a 1,2-diacyl-sn-glycero-3-phospho-(1D-myo-inositol-3,5-bisphosphate)</name>
        <dbReference type="ChEBI" id="CHEBI:57923"/>
    </ligand>
</feature>
<feature type="binding site" evidence="1">
    <location>
        <position position="454"/>
    </location>
    <ligand>
        <name>a 1,2-diacyl-sn-glycero-3-phospho-(1D-myo-inositol-3-phosphate)</name>
        <dbReference type="ChEBI" id="CHEBI:58088"/>
    </ligand>
</feature>
<feature type="binding site" evidence="4">
    <location>
        <position position="1003"/>
    </location>
    <ligand>
        <name>Zn(2+)</name>
        <dbReference type="ChEBI" id="CHEBI:29105"/>
        <label>1</label>
    </ligand>
</feature>
<feature type="binding site" evidence="4">
    <location>
        <position position="1006"/>
    </location>
    <ligand>
        <name>Zn(2+)</name>
        <dbReference type="ChEBI" id="CHEBI:29105"/>
        <label>1</label>
    </ligand>
</feature>
<feature type="binding site" evidence="4">
    <location>
        <position position="1019"/>
    </location>
    <ligand>
        <name>Zn(2+)</name>
        <dbReference type="ChEBI" id="CHEBI:29105"/>
        <label>2</label>
    </ligand>
</feature>
<feature type="binding site" evidence="4">
    <location>
        <position position="1022"/>
    </location>
    <ligand>
        <name>Zn(2+)</name>
        <dbReference type="ChEBI" id="CHEBI:29105"/>
        <label>2</label>
    </ligand>
</feature>
<feature type="binding site" evidence="4">
    <location>
        <position position="1027"/>
    </location>
    <ligand>
        <name>Zn(2+)</name>
        <dbReference type="ChEBI" id="CHEBI:29105"/>
        <label>1</label>
    </ligand>
</feature>
<feature type="binding site" evidence="4">
    <location>
        <position position="1030"/>
    </location>
    <ligand>
        <name>Zn(2+)</name>
        <dbReference type="ChEBI" id="CHEBI:29105"/>
        <label>1</label>
    </ligand>
</feature>
<feature type="binding site" evidence="4">
    <location>
        <position position="1049"/>
    </location>
    <ligand>
        <name>Zn(2+)</name>
        <dbReference type="ChEBI" id="CHEBI:29105"/>
        <label>2</label>
    </ligand>
</feature>
<feature type="binding site" evidence="4">
    <location>
        <position position="1052"/>
    </location>
    <ligand>
        <name>Zn(2+)</name>
        <dbReference type="ChEBI" id="CHEBI:29105"/>
        <label>2</label>
    </ligand>
</feature>
<keyword id="KW-0175">Coiled coil</keyword>
<keyword id="KW-0968">Cytoplasmic vesicle</keyword>
<keyword id="KW-0967">Endosome</keyword>
<keyword id="KW-0378">Hydrolase</keyword>
<keyword id="KW-0472">Membrane</keyword>
<keyword id="KW-0479">Metal-binding</keyword>
<keyword id="KW-1185">Reference proteome</keyword>
<keyword id="KW-0862">Zinc</keyword>
<keyword id="KW-0863">Zinc-finger</keyword>
<proteinExistence type="evidence at transcript level"/>
<protein>
    <recommendedName>
        <fullName evidence="2">Phosphatidylinositol-3,5-bisphosphate 3-phosphatase MTMR4</fullName>
        <ecNumber evidence="2">3.1.3.95</ecNumber>
    </recommendedName>
    <alternativeName>
        <fullName evidence="2">Myotubularin-related protein 4</fullName>
    </alternativeName>
    <alternativeName>
        <fullName>Phosphatidylinositol-3,5-bisphosphate 3-phosphatase</fullName>
    </alternativeName>
    <alternativeName>
        <fullName evidence="2">Phosphatidylinositol-3-phosphate phosphatase</fullName>
    </alternativeName>
</protein>
<name>MTMR4_XENLA</name>
<comment type="function">
    <text evidence="2">Lipid phosphatase that specifically dephosphorylates the D-3 position of phosphatidylinositol 3-phosphate and phosphatidylinositol 3,5-bisphosphate, generating phosphatidylinositol and phosphatidylinositol 5-phosphate. Decreases the levels of phosphatidylinositol 3-phosphate, a phospholipid found in cell membranes where it acts as key regulator of both cell signaling and intracellular membrane traffic, in a subset of endosomal membranes to negatively regulate both endocytic recycling and trafficking and/or maturation of endosomes toward lysosomes. Through phosphatidylinositol 3-phosphate turnover in phagosome membranes regulates phagocytosis and phagosome maturation. By decreasing phosphatidylinositol 3-monophosphate (PI3P) levels in immune cells it can also regulate the innate immune response. Beside its lipid phosphatase activity, can also function as a molecular adapter to regulate midbody abscission during mitotic cytokinesis. Can also negatively regulate TGF-beta and BMP signaling through Smad proteins dephosphorylation and retention in endosomes.</text>
</comment>
<comment type="catalytic activity">
    <reaction evidence="2">
        <text>a 1,2-diacyl-sn-glycero-3-phospho-(1D-myo-inositol-3-phosphate) + H2O = a 1,2-diacyl-sn-glycero-3-phospho-(1D-myo-inositol) + phosphate</text>
        <dbReference type="Rhea" id="RHEA:12316"/>
        <dbReference type="ChEBI" id="CHEBI:15377"/>
        <dbReference type="ChEBI" id="CHEBI:43474"/>
        <dbReference type="ChEBI" id="CHEBI:57880"/>
        <dbReference type="ChEBI" id="CHEBI:58088"/>
    </reaction>
    <physiologicalReaction direction="left-to-right" evidence="2">
        <dbReference type="Rhea" id="RHEA:12317"/>
    </physiologicalReaction>
</comment>
<comment type="catalytic activity">
    <reaction evidence="2">
        <text>a 1,2-diacyl-sn-glycero-3-phospho-(1D-myo-inositol-3,5-bisphosphate) + H2O = a 1,2-diacyl-sn-glycero-3-phospho-(1D-myo-inositol-5-phosphate) + phosphate</text>
        <dbReference type="Rhea" id="RHEA:39019"/>
        <dbReference type="ChEBI" id="CHEBI:15377"/>
        <dbReference type="ChEBI" id="CHEBI:43474"/>
        <dbReference type="ChEBI" id="CHEBI:57795"/>
        <dbReference type="ChEBI" id="CHEBI:57923"/>
        <dbReference type="EC" id="3.1.3.95"/>
    </reaction>
    <physiologicalReaction direction="left-to-right" evidence="2">
        <dbReference type="Rhea" id="RHEA:39020"/>
    </physiologicalReaction>
</comment>
<comment type="catalytic activity">
    <reaction evidence="2">
        <text>1,2-dioctanoyl-sn-glycero-3-phospho-(1-D-myo-inositol-3-phosphate) + H2O = 1,2-dioctanoyl-sn-glycero-3-phospho-(1D-myo-inositol) + phosphate</text>
        <dbReference type="Rhea" id="RHEA:42328"/>
        <dbReference type="ChEBI" id="CHEBI:15377"/>
        <dbReference type="ChEBI" id="CHEBI:43474"/>
        <dbReference type="ChEBI" id="CHEBI:65221"/>
        <dbReference type="ChEBI" id="CHEBI:78934"/>
    </reaction>
    <physiologicalReaction direction="left-to-right" evidence="2">
        <dbReference type="Rhea" id="RHEA:42329"/>
    </physiologicalReaction>
</comment>
<comment type="catalytic activity">
    <reaction evidence="2">
        <text>1,2-dioctanoyl-sn-glycero-3-phospho-(1D-myo-inositol-3,5-bisphosphate) + H2O = 1,2-dioctanoyl-sn-glycero-3-phospho-(1D-myo-inositol-5-phosphate) + phosphate</text>
        <dbReference type="Rhea" id="RHEA:45632"/>
        <dbReference type="ChEBI" id="CHEBI:15377"/>
        <dbReference type="ChEBI" id="CHEBI:43474"/>
        <dbReference type="ChEBI" id="CHEBI:78911"/>
        <dbReference type="ChEBI" id="CHEBI:85342"/>
    </reaction>
    <physiologicalReaction direction="left-to-right" evidence="2">
        <dbReference type="Rhea" id="RHEA:45633"/>
    </physiologicalReaction>
</comment>
<comment type="subunit">
    <text evidence="2">Homooligomeric.</text>
</comment>
<comment type="subcellular location">
    <subcellularLocation>
        <location evidence="2">Early endosome membrane</location>
        <topology evidence="2">Peripheral membrane protein</topology>
    </subcellularLocation>
    <subcellularLocation>
        <location evidence="2">Recycling endosome membrane</location>
        <topology evidence="2">Peripheral membrane protein</topology>
    </subcellularLocation>
    <subcellularLocation>
        <location evidence="2">Late endosome membrane</location>
        <topology evidence="2">Peripheral membrane protein</topology>
    </subcellularLocation>
    <subcellularLocation>
        <location evidence="2">Cytoplasmic vesicle</location>
        <location evidence="2">Phagosome membrane</location>
        <topology evidence="2">Peripheral membrane protein</topology>
    </subcellularLocation>
</comment>
<comment type="domain">
    <text evidence="2">The coiled coil domain mediates the interaction between MTMR3 and MTMR4.</text>
</comment>
<comment type="similarity">
    <text evidence="7">Belongs to the protein-tyrosine phosphatase family. Non-receptor class myotubularin subfamily.</text>
</comment>
<comment type="caution">
    <text evidence="7">Although myotubularins have been classified as Protein Tyrosine Phosphatases (PTP), they are specific phosphoinositides 3-phosphatases and not protein phosphatases.</text>
</comment>
<sequence>MGDEPPSLEYIQAKDLFPPRELVKEEEKLQVPFPVLPGEGVEYLGSANDAVIAISNYRLHIKFKDSVVNVPLRMIEAVESRDMFQLQIICKDSKVVRCHFSTFKQCQEWLKRLSRATLRPAKQEDLFAFAYHAWCQGVCTDEEEPLIHLCRPGDHVKSRFQIELKRMGFDLQNAWRVSEINNNYKLCQSYPQKLLVPVWITDKELENVATFRSWKRIPVVVYRHTRTGAVIARCSQPEISWWGWRNADDEYLVTSIAKACALNPAVRMPNGNPSNKGNNDGSDNSDTDFDSSLTACPVEGGGVPQKLLIVDARSYTAAVANRAKGGGCECEEYYPNCEVAFMGMANIHSIRNSFQYLRAVCNQVPDPGNWLSALESTKWLQHLSAMLKAATVVASAVDREERPVLVHCSDGWDRTPQIVSLAKILLDPYYRTLEGFQVLVETDWLDYGHKFADRCGHQENREDQNEQCPVFLQWLDCIHQLLFQFPCHFEFNHAFLVKLVQHTYSCLYGTFLANNLCEREMRNIYKRTCSVWSLLRTGNKIFHNLLYMPGSDLVLHPVCHVRALQLWTAVYLPATSPCTPMDDRMEMYLTPASQGPQFHARSLVRLPKTRSMDNLLTACDSGGLLTRTSSDPNLNNHQGNLESCSSSKEGNETEICDIQQQALSIEPKEEDGNDSKSTDHENEDSGSATNQNNNEQNALNNILSIAKPDSIQCKRDRFKSVLEKSSVIPVPSNEGTITDDNSHSNGTSEHLPVPALVTNGSVQNKSCVDVSKAMKLSTELSRTDKKPVFQTQRDEFSFCTSNWDSLPGMMRSVPICEVGLRRPLSYDCSTRSQHSRNGRHTMKLTGNLPASFHCSGPFTKRCRCVMACHTKQVQGSRFLPLACPSPAPLIYQDDDGLPIPSDVVQQRLRQMEASYKQEVDLLRRQVWELQLQLEIRQYCAPPSEPEADYEDDFTCVKESDGSDMDDLYSDKSEDRLSEASWEPVDKKETEVTRWVPDHMASHCFNCDCEFWLAKRRHHCRNCGNVFCAACCHLKLPIPDQQLYDPVLVCNTCYDHIQVSRARELMSQQLKKPLTAASS</sequence>
<reference key="1">
    <citation type="submission" date="2003-01" db="EMBL/GenBank/DDBJ databases">
        <authorList>
            <consortium name="NIH - Xenopus Gene Collection (XGC) project"/>
        </authorList>
    </citation>
    <scope>NUCLEOTIDE SEQUENCE [LARGE SCALE MRNA]</scope>
    <source>
        <tissue>Embryo</tissue>
    </source>
</reference>